<name>Y9458_DICDI</name>
<feature type="chain" id="PRO_0000348194" description="Putative uncharacterized protein DDB_G0276061">
    <location>
        <begin position="1"/>
        <end position="136"/>
    </location>
</feature>
<feature type="region of interest" description="Disordered" evidence="1">
    <location>
        <begin position="58"/>
        <end position="82"/>
    </location>
</feature>
<feature type="region of interest" description="Disordered" evidence="1">
    <location>
        <begin position="112"/>
        <end position="136"/>
    </location>
</feature>
<keyword id="KW-1185">Reference proteome</keyword>
<proteinExistence type="predicted"/>
<accession>Q75JM4</accession>
<accession>Q552A0</accession>
<organism>
    <name type="scientific">Dictyostelium discoideum</name>
    <name type="common">Social amoeba</name>
    <dbReference type="NCBI Taxonomy" id="44689"/>
    <lineage>
        <taxon>Eukaryota</taxon>
        <taxon>Amoebozoa</taxon>
        <taxon>Evosea</taxon>
        <taxon>Eumycetozoa</taxon>
        <taxon>Dictyostelia</taxon>
        <taxon>Dictyosteliales</taxon>
        <taxon>Dictyosteliaceae</taxon>
        <taxon>Dictyostelium</taxon>
    </lineage>
</organism>
<evidence type="ECO:0000256" key="1">
    <source>
        <dbReference type="SAM" id="MobiDB-lite"/>
    </source>
</evidence>
<protein>
    <recommendedName>
        <fullName>Putative uncharacterized protein DDB_G0276061</fullName>
    </recommendedName>
</protein>
<sequence length="136" mass="15655">MDSAVELSDPFDYIDHYFGYPVIGTEYSYEKLVNPSMLCEDKYFNLVGMMNYIIKNKTSDDDEKPGNSKIKSHTDQPPTTQTLSKSNYNVIFKIVIFIIIKCKRIKKKNRVNNPKIKTNNPNEEFENTGADSVVTQ</sequence>
<reference key="1">
    <citation type="journal article" date="2002" name="Nature">
        <title>Sequence and analysis of chromosome 2 of Dictyostelium discoideum.</title>
        <authorList>
            <person name="Gloeckner G."/>
            <person name="Eichinger L."/>
            <person name="Szafranski K."/>
            <person name="Pachebat J.A."/>
            <person name="Bankier A.T."/>
            <person name="Dear P.H."/>
            <person name="Lehmann R."/>
            <person name="Baumgart C."/>
            <person name="Parra G."/>
            <person name="Abril J.F."/>
            <person name="Guigo R."/>
            <person name="Kumpf K."/>
            <person name="Tunggal B."/>
            <person name="Cox E.C."/>
            <person name="Quail M.A."/>
            <person name="Platzer M."/>
            <person name="Rosenthal A."/>
            <person name="Noegel A.A."/>
        </authorList>
    </citation>
    <scope>NUCLEOTIDE SEQUENCE [LARGE SCALE GENOMIC DNA]</scope>
    <source>
        <strain>AX4</strain>
    </source>
</reference>
<reference key="2">
    <citation type="journal article" date="2005" name="Nature">
        <title>The genome of the social amoeba Dictyostelium discoideum.</title>
        <authorList>
            <person name="Eichinger L."/>
            <person name="Pachebat J.A."/>
            <person name="Gloeckner G."/>
            <person name="Rajandream M.A."/>
            <person name="Sucgang R."/>
            <person name="Berriman M."/>
            <person name="Song J."/>
            <person name="Olsen R."/>
            <person name="Szafranski K."/>
            <person name="Xu Q."/>
            <person name="Tunggal B."/>
            <person name="Kummerfeld S."/>
            <person name="Madera M."/>
            <person name="Konfortov B.A."/>
            <person name="Rivero F."/>
            <person name="Bankier A.T."/>
            <person name="Lehmann R."/>
            <person name="Hamlin N."/>
            <person name="Davies R."/>
            <person name="Gaudet P."/>
            <person name="Fey P."/>
            <person name="Pilcher K."/>
            <person name="Chen G."/>
            <person name="Saunders D."/>
            <person name="Sodergren E.J."/>
            <person name="Davis P."/>
            <person name="Kerhornou A."/>
            <person name="Nie X."/>
            <person name="Hall N."/>
            <person name="Anjard C."/>
            <person name="Hemphill L."/>
            <person name="Bason N."/>
            <person name="Farbrother P."/>
            <person name="Desany B."/>
            <person name="Just E."/>
            <person name="Morio T."/>
            <person name="Rost R."/>
            <person name="Churcher C.M."/>
            <person name="Cooper J."/>
            <person name="Haydock S."/>
            <person name="van Driessche N."/>
            <person name="Cronin A."/>
            <person name="Goodhead I."/>
            <person name="Muzny D.M."/>
            <person name="Mourier T."/>
            <person name="Pain A."/>
            <person name="Lu M."/>
            <person name="Harper D."/>
            <person name="Lindsay R."/>
            <person name="Hauser H."/>
            <person name="James K.D."/>
            <person name="Quiles M."/>
            <person name="Madan Babu M."/>
            <person name="Saito T."/>
            <person name="Buchrieser C."/>
            <person name="Wardroper A."/>
            <person name="Felder M."/>
            <person name="Thangavelu M."/>
            <person name="Johnson D."/>
            <person name="Knights A."/>
            <person name="Loulseged H."/>
            <person name="Mungall K.L."/>
            <person name="Oliver K."/>
            <person name="Price C."/>
            <person name="Quail M.A."/>
            <person name="Urushihara H."/>
            <person name="Hernandez J."/>
            <person name="Rabbinowitsch E."/>
            <person name="Steffen D."/>
            <person name="Sanders M."/>
            <person name="Ma J."/>
            <person name="Kohara Y."/>
            <person name="Sharp S."/>
            <person name="Simmonds M.N."/>
            <person name="Spiegler S."/>
            <person name="Tivey A."/>
            <person name="Sugano S."/>
            <person name="White B."/>
            <person name="Walker D."/>
            <person name="Woodward J.R."/>
            <person name="Winckler T."/>
            <person name="Tanaka Y."/>
            <person name="Shaulsky G."/>
            <person name="Schleicher M."/>
            <person name="Weinstock G.M."/>
            <person name="Rosenthal A."/>
            <person name="Cox E.C."/>
            <person name="Chisholm R.L."/>
            <person name="Gibbs R.A."/>
            <person name="Loomis W.F."/>
            <person name="Platzer M."/>
            <person name="Kay R.R."/>
            <person name="Williams J.G."/>
            <person name="Dear P.H."/>
            <person name="Noegel A.A."/>
            <person name="Barrell B.G."/>
            <person name="Kuspa A."/>
        </authorList>
    </citation>
    <scope>NUCLEOTIDE SEQUENCE [LARGE SCALE GENOMIC DNA]</scope>
    <source>
        <strain>AX4</strain>
    </source>
</reference>
<gene>
    <name type="ORF">DDB_G0276061</name>
</gene>
<dbReference type="EMBL" id="AAFI02000014">
    <property type="protein sequence ID" value="EAL69330.1"/>
    <property type="molecule type" value="Genomic_DNA"/>
</dbReference>
<dbReference type="RefSeq" id="XP_643328.1">
    <property type="nucleotide sequence ID" value="XM_638236.1"/>
</dbReference>
<dbReference type="PaxDb" id="44689-DDB0169458"/>
<dbReference type="EnsemblProtists" id="EAL69330">
    <property type="protein sequence ID" value="EAL69330"/>
    <property type="gene ID" value="DDB_G0276061"/>
</dbReference>
<dbReference type="GeneID" id="8620375"/>
<dbReference type="KEGG" id="ddi:DDB_G0276061"/>
<dbReference type="dictyBase" id="DDB_G0276061"/>
<dbReference type="VEuPathDB" id="AmoebaDB:DDB_G0276061"/>
<dbReference type="HOGENOM" id="CLU_1879287_0_0_1"/>
<dbReference type="InParanoid" id="Q75JM4"/>
<dbReference type="PRO" id="PR:Q75JM4"/>
<dbReference type="Proteomes" id="UP000002195">
    <property type="component" value="Chromosome 2"/>
</dbReference>